<name>RHAR_ENT38</name>
<feature type="chain" id="PRO_1000068696" description="HTH-type transcriptional activator RhaR">
    <location>
        <begin position="1"/>
        <end position="282"/>
    </location>
</feature>
<feature type="domain" description="HTH araC/xylS-type" evidence="1">
    <location>
        <begin position="179"/>
        <end position="277"/>
    </location>
</feature>
<feature type="DNA-binding region" description="H-T-H motif" evidence="1">
    <location>
        <begin position="196"/>
        <end position="217"/>
    </location>
</feature>
<feature type="DNA-binding region" description="H-T-H motif" evidence="1">
    <location>
        <begin position="244"/>
        <end position="267"/>
    </location>
</feature>
<feature type="site" description="Interaction with sigma-70" evidence="1">
    <location>
        <position position="246"/>
    </location>
</feature>
<accession>A4WG90</accession>
<dbReference type="EMBL" id="CP000653">
    <property type="protein sequence ID" value="ABP62720.1"/>
    <property type="molecule type" value="Genomic_DNA"/>
</dbReference>
<dbReference type="RefSeq" id="WP_015961024.1">
    <property type="nucleotide sequence ID" value="NC_009436.1"/>
</dbReference>
<dbReference type="SMR" id="A4WG90"/>
<dbReference type="STRING" id="399742.Ent638_4065"/>
<dbReference type="KEGG" id="ent:Ent638_4065"/>
<dbReference type="eggNOG" id="COG1917">
    <property type="taxonomic scope" value="Bacteria"/>
</dbReference>
<dbReference type="eggNOG" id="COG4977">
    <property type="taxonomic scope" value="Bacteria"/>
</dbReference>
<dbReference type="HOGENOM" id="CLU_000445_88_5_6"/>
<dbReference type="OrthoDB" id="2547276at2"/>
<dbReference type="Proteomes" id="UP000000230">
    <property type="component" value="Chromosome"/>
</dbReference>
<dbReference type="GO" id="GO:0005737">
    <property type="term" value="C:cytoplasm"/>
    <property type="evidence" value="ECO:0007669"/>
    <property type="project" value="UniProtKB-SubCell"/>
</dbReference>
<dbReference type="GO" id="GO:0003700">
    <property type="term" value="F:DNA-binding transcription factor activity"/>
    <property type="evidence" value="ECO:0007669"/>
    <property type="project" value="UniProtKB-UniRule"/>
</dbReference>
<dbReference type="GO" id="GO:0043565">
    <property type="term" value="F:sequence-specific DNA binding"/>
    <property type="evidence" value="ECO:0007669"/>
    <property type="project" value="InterPro"/>
</dbReference>
<dbReference type="GO" id="GO:0045893">
    <property type="term" value="P:positive regulation of DNA-templated transcription"/>
    <property type="evidence" value="ECO:0007669"/>
    <property type="project" value="UniProtKB-UniRule"/>
</dbReference>
<dbReference type="GO" id="GO:0019299">
    <property type="term" value="P:rhamnose metabolic process"/>
    <property type="evidence" value="ECO:0007669"/>
    <property type="project" value="UniProtKB-UniRule"/>
</dbReference>
<dbReference type="CDD" id="cd06977">
    <property type="entry name" value="cupin_RhaR_RhaS-like_N"/>
    <property type="match status" value="1"/>
</dbReference>
<dbReference type="Gene3D" id="1.10.10.60">
    <property type="entry name" value="Homeodomain-like"/>
    <property type="match status" value="1"/>
</dbReference>
<dbReference type="Gene3D" id="2.60.120.10">
    <property type="entry name" value="Jelly Rolls"/>
    <property type="match status" value="1"/>
</dbReference>
<dbReference type="HAMAP" id="MF_01533">
    <property type="entry name" value="HTH_type_RhaR"/>
    <property type="match status" value="1"/>
</dbReference>
<dbReference type="InterPro" id="IPR003313">
    <property type="entry name" value="AraC-bd"/>
</dbReference>
<dbReference type="InterPro" id="IPR009057">
    <property type="entry name" value="Homeodomain-like_sf"/>
</dbReference>
<dbReference type="InterPro" id="IPR018060">
    <property type="entry name" value="HTH_AraC"/>
</dbReference>
<dbReference type="InterPro" id="IPR018062">
    <property type="entry name" value="HTH_AraC-typ_CS"/>
</dbReference>
<dbReference type="InterPro" id="IPR047220">
    <property type="entry name" value="RhaR_RhaS-like_N"/>
</dbReference>
<dbReference type="InterPro" id="IPR014710">
    <property type="entry name" value="RmlC-like_jellyroll"/>
</dbReference>
<dbReference type="InterPro" id="IPR011051">
    <property type="entry name" value="RmlC_Cupin_sf"/>
</dbReference>
<dbReference type="InterPro" id="IPR023699">
    <property type="entry name" value="Tscrpt_act_RhaR"/>
</dbReference>
<dbReference type="InterPro" id="IPR020449">
    <property type="entry name" value="Tscrpt_reg_AraC-type_HTH"/>
</dbReference>
<dbReference type="NCBIfam" id="NF010025">
    <property type="entry name" value="PRK13500.1"/>
    <property type="match status" value="1"/>
</dbReference>
<dbReference type="NCBIfam" id="NF010026">
    <property type="entry name" value="PRK13501.1"/>
    <property type="match status" value="1"/>
</dbReference>
<dbReference type="NCBIfam" id="NF010027">
    <property type="entry name" value="PRK13502.1"/>
    <property type="match status" value="1"/>
</dbReference>
<dbReference type="PANTHER" id="PTHR43280">
    <property type="entry name" value="ARAC-FAMILY TRANSCRIPTIONAL REGULATOR"/>
    <property type="match status" value="1"/>
</dbReference>
<dbReference type="PANTHER" id="PTHR43280:SF13">
    <property type="entry name" value="HTH-TYPE TRANSCRIPTIONAL ACTIVATOR RHAR"/>
    <property type="match status" value="1"/>
</dbReference>
<dbReference type="Pfam" id="PF02311">
    <property type="entry name" value="AraC_binding"/>
    <property type="match status" value="1"/>
</dbReference>
<dbReference type="Pfam" id="PF12833">
    <property type="entry name" value="HTH_18"/>
    <property type="match status" value="1"/>
</dbReference>
<dbReference type="PRINTS" id="PR00032">
    <property type="entry name" value="HTHARAC"/>
</dbReference>
<dbReference type="SMART" id="SM00342">
    <property type="entry name" value="HTH_ARAC"/>
    <property type="match status" value="1"/>
</dbReference>
<dbReference type="SUPFAM" id="SSF46689">
    <property type="entry name" value="Homeodomain-like"/>
    <property type="match status" value="1"/>
</dbReference>
<dbReference type="SUPFAM" id="SSF51182">
    <property type="entry name" value="RmlC-like cupins"/>
    <property type="match status" value="1"/>
</dbReference>
<dbReference type="PROSITE" id="PS00041">
    <property type="entry name" value="HTH_ARAC_FAMILY_1"/>
    <property type="match status" value="1"/>
</dbReference>
<dbReference type="PROSITE" id="PS01124">
    <property type="entry name" value="HTH_ARAC_FAMILY_2"/>
    <property type="match status" value="1"/>
</dbReference>
<proteinExistence type="inferred from homology"/>
<organism>
    <name type="scientific">Enterobacter sp. (strain 638)</name>
    <dbReference type="NCBI Taxonomy" id="399742"/>
    <lineage>
        <taxon>Bacteria</taxon>
        <taxon>Pseudomonadati</taxon>
        <taxon>Pseudomonadota</taxon>
        <taxon>Gammaproteobacteria</taxon>
        <taxon>Enterobacterales</taxon>
        <taxon>Enterobacteriaceae</taxon>
        <taxon>Enterobacter</taxon>
    </lineage>
</organism>
<gene>
    <name evidence="1" type="primary">rhaR</name>
    <name type="ordered locus">Ent638_4065</name>
</gene>
<sequence>MGVPLILRKTDFFANAGQAVAVADRYPQNVFAEHTHEFCELVLVWRGNGLHVLNDRPYRITRGDLFYIRAEDKHSYASVNDLVLQNVIYCPDRLKLNVDWASNIPGFNDARGAPHWRLSSNGMGQVRPVITQLEQESLKADQSANEMAELLFAQLVMTLKRFRYATDNPSANEQEALLDKLITALAGSLNRSFVLEKFCEQEQCSERALRQQFRTQTGMTVNHYLRQLRICHAQYLLQHTELMVSEVAMRCGFEDSNYFSVVFNREVGMTPVQWRHRSRKAA</sequence>
<protein>
    <recommendedName>
        <fullName evidence="1">HTH-type transcriptional activator RhaR</fullName>
    </recommendedName>
    <alternativeName>
        <fullName evidence="1">L-rhamnose operon transcriptional activator RhaR</fullName>
    </alternativeName>
</protein>
<keyword id="KW-0010">Activator</keyword>
<keyword id="KW-0963">Cytoplasm</keyword>
<keyword id="KW-0238">DNA-binding</keyword>
<keyword id="KW-0677">Repeat</keyword>
<keyword id="KW-0684">Rhamnose metabolism</keyword>
<keyword id="KW-0804">Transcription</keyword>
<keyword id="KW-0805">Transcription regulation</keyword>
<comment type="function">
    <text evidence="1">Activates expression of the rhaSR operon in response to L-rhamnose.</text>
</comment>
<comment type="subunit">
    <text evidence="1">Binds DNA as a dimer.</text>
</comment>
<comment type="subcellular location">
    <subcellularLocation>
        <location evidence="1">Cytoplasm</location>
    </subcellularLocation>
</comment>
<evidence type="ECO:0000255" key="1">
    <source>
        <dbReference type="HAMAP-Rule" id="MF_01533"/>
    </source>
</evidence>
<reference key="1">
    <citation type="journal article" date="2010" name="PLoS Genet.">
        <title>Genome sequence of the plant growth promoting endophytic bacterium Enterobacter sp. 638.</title>
        <authorList>
            <person name="Taghavi S."/>
            <person name="van der Lelie D."/>
            <person name="Hoffman A."/>
            <person name="Zhang Y.B."/>
            <person name="Walla M.D."/>
            <person name="Vangronsveld J."/>
            <person name="Newman L."/>
            <person name="Monchy S."/>
        </authorList>
    </citation>
    <scope>NUCLEOTIDE SEQUENCE [LARGE SCALE GENOMIC DNA]</scope>
    <source>
        <strain>638</strain>
    </source>
</reference>